<organism>
    <name type="scientific">Echinococcus granulosus</name>
    <name type="common">Hydatid tapeworm</name>
    <dbReference type="NCBI Taxonomy" id="6210"/>
    <lineage>
        <taxon>Eukaryota</taxon>
        <taxon>Metazoa</taxon>
        <taxon>Spiralia</taxon>
        <taxon>Lophotrochozoa</taxon>
        <taxon>Platyhelminthes</taxon>
        <taxon>Cestoda</taxon>
        <taxon>Eucestoda</taxon>
        <taxon>Cyclophyllidea</taxon>
        <taxon>Taeniidae</taxon>
        <taxon>Echinococcus</taxon>
        <taxon>Echinococcus granulosus group</taxon>
    </lineage>
</organism>
<name>FRIH_ECHGR</name>
<dbReference type="EC" id="1.16.3.1" evidence="1"/>
<dbReference type="EMBL" id="Z31712">
    <property type="protein sequence ID" value="CAA83506.1"/>
    <property type="molecule type" value="mRNA"/>
</dbReference>
<dbReference type="SMR" id="O46119"/>
<dbReference type="OrthoDB" id="186462at2759"/>
<dbReference type="Proteomes" id="UP000492820">
    <property type="component" value="Unplaced"/>
</dbReference>
<dbReference type="GO" id="GO:0005737">
    <property type="term" value="C:cytoplasm"/>
    <property type="evidence" value="ECO:0007669"/>
    <property type="project" value="UniProtKB-SubCell"/>
</dbReference>
<dbReference type="GO" id="GO:0008199">
    <property type="term" value="F:ferric iron binding"/>
    <property type="evidence" value="ECO:0007669"/>
    <property type="project" value="InterPro"/>
</dbReference>
<dbReference type="GO" id="GO:0008198">
    <property type="term" value="F:ferrous iron binding"/>
    <property type="evidence" value="ECO:0007669"/>
    <property type="project" value="TreeGrafter"/>
</dbReference>
<dbReference type="GO" id="GO:0004322">
    <property type="term" value="F:ferroxidase activity"/>
    <property type="evidence" value="ECO:0007669"/>
    <property type="project" value="UniProtKB-EC"/>
</dbReference>
<dbReference type="GO" id="GO:0006879">
    <property type="term" value="P:intracellular iron ion homeostasis"/>
    <property type="evidence" value="ECO:0007669"/>
    <property type="project" value="UniProtKB-KW"/>
</dbReference>
<dbReference type="GO" id="GO:0006826">
    <property type="term" value="P:iron ion transport"/>
    <property type="evidence" value="ECO:0007669"/>
    <property type="project" value="InterPro"/>
</dbReference>
<dbReference type="CDD" id="cd01056">
    <property type="entry name" value="Euk_Ferritin"/>
    <property type="match status" value="1"/>
</dbReference>
<dbReference type="FunFam" id="1.20.1260.10:FF:000002">
    <property type="entry name" value="Ferritin, mitochondrial"/>
    <property type="match status" value="1"/>
</dbReference>
<dbReference type="Gene3D" id="1.20.1260.10">
    <property type="match status" value="1"/>
</dbReference>
<dbReference type="InterPro" id="IPR001519">
    <property type="entry name" value="Ferritin"/>
</dbReference>
<dbReference type="InterPro" id="IPR012347">
    <property type="entry name" value="Ferritin-like"/>
</dbReference>
<dbReference type="InterPro" id="IPR009040">
    <property type="entry name" value="Ferritin-like_diiron"/>
</dbReference>
<dbReference type="InterPro" id="IPR009078">
    <property type="entry name" value="Ferritin-like_SF"/>
</dbReference>
<dbReference type="InterPro" id="IPR008331">
    <property type="entry name" value="Ferritin_DPS_dom"/>
</dbReference>
<dbReference type="PANTHER" id="PTHR11431">
    <property type="entry name" value="FERRITIN"/>
    <property type="match status" value="1"/>
</dbReference>
<dbReference type="PANTHER" id="PTHR11431:SF75">
    <property type="entry name" value="FERRITIN"/>
    <property type="match status" value="1"/>
</dbReference>
<dbReference type="Pfam" id="PF00210">
    <property type="entry name" value="Ferritin"/>
    <property type="match status" value="1"/>
</dbReference>
<dbReference type="SUPFAM" id="SSF47240">
    <property type="entry name" value="Ferritin-like"/>
    <property type="match status" value="1"/>
</dbReference>
<dbReference type="PROSITE" id="PS50905">
    <property type="entry name" value="FERRITIN_LIKE"/>
    <property type="match status" value="1"/>
</dbReference>
<comment type="function">
    <text evidence="1">Stores iron in a soluble, non-toxic, readily available form. Important for iron homeostasis. Has ferroxidase activity. Iron is taken up in the ferrous form and deposited as ferric hydroxides after oxidation.</text>
</comment>
<comment type="catalytic activity">
    <reaction evidence="1">
        <text>4 Fe(2+) + O2 + 4 H(+) = 4 Fe(3+) + 2 H2O</text>
        <dbReference type="Rhea" id="RHEA:11148"/>
        <dbReference type="ChEBI" id="CHEBI:15377"/>
        <dbReference type="ChEBI" id="CHEBI:15378"/>
        <dbReference type="ChEBI" id="CHEBI:15379"/>
        <dbReference type="ChEBI" id="CHEBI:29033"/>
        <dbReference type="ChEBI" id="CHEBI:29034"/>
        <dbReference type="EC" id="1.16.3.1"/>
    </reaction>
</comment>
<comment type="subunit">
    <text evidence="1">Oligomer of 24 subunits. There are two types of subunits: L (light) chain and H (heavy) chain. The functional molecule is roughly spherical and contains a central cavity into which the insoluble mineral iron core is deposited.</text>
</comment>
<comment type="subcellular location">
    <subcellularLocation>
        <location evidence="2">Cytoplasm</location>
    </subcellularLocation>
</comment>
<comment type="similarity">
    <text evidence="4">Belongs to the ferritin family.</text>
</comment>
<feature type="chain" id="PRO_0000201081" description="Ferritin heavy chain">
    <location>
        <begin position="1"/>
        <end position="173"/>
    </location>
</feature>
<feature type="domain" description="Ferritin-like diiron" evidence="3">
    <location>
        <begin position="6"/>
        <end position="155"/>
    </location>
</feature>
<feature type="binding site" evidence="3">
    <location>
        <position position="23"/>
    </location>
    <ligand>
        <name>Fe cation</name>
        <dbReference type="ChEBI" id="CHEBI:24875"/>
        <label>1</label>
    </ligand>
</feature>
<feature type="binding site" evidence="3">
    <location>
        <position position="58"/>
    </location>
    <ligand>
        <name>Fe cation</name>
        <dbReference type="ChEBI" id="CHEBI:24875"/>
        <label>1</label>
    </ligand>
</feature>
<feature type="binding site" evidence="3">
    <location>
        <position position="58"/>
    </location>
    <ligand>
        <name>Fe cation</name>
        <dbReference type="ChEBI" id="CHEBI:24875"/>
        <label>2</label>
    </ligand>
</feature>
<feature type="binding site" evidence="3">
    <location>
        <position position="61"/>
    </location>
    <ligand>
        <name>Fe cation</name>
        <dbReference type="ChEBI" id="CHEBI:24875"/>
        <label>1</label>
    </ligand>
</feature>
<feature type="binding site" evidence="3">
    <location>
        <position position="103"/>
    </location>
    <ligand>
        <name>Fe cation</name>
        <dbReference type="ChEBI" id="CHEBI:24875"/>
        <label>2</label>
    </ligand>
</feature>
<feature type="binding site" evidence="3">
    <location>
        <position position="137"/>
    </location>
    <ligand>
        <name>Fe cation</name>
        <dbReference type="ChEBI" id="CHEBI:24875"/>
        <label>2</label>
    </ligand>
</feature>
<reference key="1">
    <citation type="journal article" date="1995" name="Parasitol. Res.">
        <title>Cloning and immunological characterisation of Echinococcus granulosus ferritin.</title>
        <authorList>
            <person name="Ersfeld K."/>
            <person name="Craig P.S."/>
        </authorList>
    </citation>
    <scope>NUCLEOTIDE SEQUENCE [MRNA]</scope>
</reference>
<protein>
    <recommendedName>
        <fullName>Ferritin heavy chain</fullName>
        <ecNumber evidence="1">1.16.3.1</ecNumber>
    </recommendedName>
</protein>
<sequence>MSLVRQNFHEECERGINRQINMELYASYLYLAMSQHFDRDDVALPGFREFFAKASEEEREHAIKLMRYQCGRGGRIVYQDIAKPQTTEWASGLEAMEMALKIEREVNESLLALRGVANKNNDSQFCEFLEGEFLGEQVSDIKKLAGYVTNLKRCGPGLGEYIFDKETLQGGEK</sequence>
<accession>O46119</accession>
<proteinExistence type="evidence at transcript level"/>
<evidence type="ECO:0000250" key="1">
    <source>
        <dbReference type="UniProtKB" id="P02794"/>
    </source>
</evidence>
<evidence type="ECO:0000250" key="2">
    <source>
        <dbReference type="UniProtKB" id="P19130"/>
    </source>
</evidence>
<evidence type="ECO:0000255" key="3">
    <source>
        <dbReference type="PROSITE-ProRule" id="PRU00085"/>
    </source>
</evidence>
<evidence type="ECO:0000305" key="4"/>
<keyword id="KW-0963">Cytoplasm</keyword>
<keyword id="KW-0408">Iron</keyword>
<keyword id="KW-0409">Iron storage</keyword>
<keyword id="KW-0479">Metal-binding</keyword>
<keyword id="KW-0560">Oxidoreductase</keyword>